<organism>
    <name type="scientific">Streptomyces coelicolor (strain ATCC BAA-471 / A3(2) / M145)</name>
    <dbReference type="NCBI Taxonomy" id="100226"/>
    <lineage>
        <taxon>Bacteria</taxon>
        <taxon>Bacillati</taxon>
        <taxon>Actinomycetota</taxon>
        <taxon>Actinomycetes</taxon>
        <taxon>Kitasatosporales</taxon>
        <taxon>Streptomycetaceae</taxon>
        <taxon>Streptomyces</taxon>
        <taxon>Streptomyces albidoflavus group</taxon>
    </lineage>
</organism>
<keyword id="KW-0963">Cytoplasm</keyword>
<keyword id="KW-0413">Isomerase</keyword>
<keyword id="KW-0627">Porphyrin biosynthesis</keyword>
<keyword id="KW-0663">Pyridoxal phosphate</keyword>
<keyword id="KW-1185">Reference proteome</keyword>
<dbReference type="EC" id="5.4.3.8" evidence="1"/>
<dbReference type="EMBL" id="AL939120">
    <property type="protein sequence ID" value="CAC08376.1"/>
    <property type="molecule type" value="Genomic_DNA"/>
</dbReference>
<dbReference type="RefSeq" id="NP_628635.1">
    <property type="nucleotide sequence ID" value="NC_003888.3"/>
</dbReference>
<dbReference type="RefSeq" id="WP_011029675.1">
    <property type="nucleotide sequence ID" value="NZ_VNID01000017.1"/>
</dbReference>
<dbReference type="SMR" id="Q9F2S0"/>
<dbReference type="FunCoup" id="Q9F2S0">
    <property type="interactions" value="354"/>
</dbReference>
<dbReference type="STRING" id="100226.gene:17762114"/>
<dbReference type="PaxDb" id="100226-SCO4469"/>
<dbReference type="KEGG" id="sco:SCO4469"/>
<dbReference type="PATRIC" id="fig|100226.15.peg.4538"/>
<dbReference type="eggNOG" id="COG0001">
    <property type="taxonomic scope" value="Bacteria"/>
</dbReference>
<dbReference type="HOGENOM" id="CLU_016922_1_5_11"/>
<dbReference type="InParanoid" id="Q9F2S0"/>
<dbReference type="OrthoDB" id="9801052at2"/>
<dbReference type="PhylomeDB" id="Q9F2S0"/>
<dbReference type="UniPathway" id="UPA00251">
    <property type="reaction ID" value="UER00317"/>
</dbReference>
<dbReference type="Proteomes" id="UP000001973">
    <property type="component" value="Chromosome"/>
</dbReference>
<dbReference type="GO" id="GO:0005737">
    <property type="term" value="C:cytoplasm"/>
    <property type="evidence" value="ECO:0007669"/>
    <property type="project" value="UniProtKB-SubCell"/>
</dbReference>
<dbReference type="GO" id="GO:0042286">
    <property type="term" value="F:glutamate-1-semialdehyde 2,1-aminomutase activity"/>
    <property type="evidence" value="ECO:0007669"/>
    <property type="project" value="UniProtKB-UniRule"/>
</dbReference>
<dbReference type="GO" id="GO:0030170">
    <property type="term" value="F:pyridoxal phosphate binding"/>
    <property type="evidence" value="ECO:0007669"/>
    <property type="project" value="InterPro"/>
</dbReference>
<dbReference type="GO" id="GO:0008483">
    <property type="term" value="F:transaminase activity"/>
    <property type="evidence" value="ECO:0007669"/>
    <property type="project" value="InterPro"/>
</dbReference>
<dbReference type="GO" id="GO:0006782">
    <property type="term" value="P:protoporphyrinogen IX biosynthetic process"/>
    <property type="evidence" value="ECO:0007669"/>
    <property type="project" value="UniProtKB-UniRule"/>
</dbReference>
<dbReference type="CDD" id="cd00610">
    <property type="entry name" value="OAT_like"/>
    <property type="match status" value="1"/>
</dbReference>
<dbReference type="FunFam" id="3.40.640.10:FF:000021">
    <property type="entry name" value="Glutamate-1-semialdehyde 2,1-aminomutase"/>
    <property type="match status" value="1"/>
</dbReference>
<dbReference type="Gene3D" id="3.90.1150.10">
    <property type="entry name" value="Aspartate Aminotransferase, domain 1"/>
    <property type="match status" value="1"/>
</dbReference>
<dbReference type="Gene3D" id="3.40.640.10">
    <property type="entry name" value="Type I PLP-dependent aspartate aminotransferase-like (Major domain)"/>
    <property type="match status" value="1"/>
</dbReference>
<dbReference type="HAMAP" id="MF_00375">
    <property type="entry name" value="HemL_aminotrans_3"/>
    <property type="match status" value="1"/>
</dbReference>
<dbReference type="InterPro" id="IPR004639">
    <property type="entry name" value="4pyrrol_synth_GluAld_NH2Trfase"/>
</dbReference>
<dbReference type="InterPro" id="IPR005814">
    <property type="entry name" value="Aminotrans_3"/>
</dbReference>
<dbReference type="InterPro" id="IPR049704">
    <property type="entry name" value="Aminotrans_3_PPA_site"/>
</dbReference>
<dbReference type="InterPro" id="IPR015424">
    <property type="entry name" value="PyrdxlP-dep_Trfase"/>
</dbReference>
<dbReference type="InterPro" id="IPR015421">
    <property type="entry name" value="PyrdxlP-dep_Trfase_major"/>
</dbReference>
<dbReference type="InterPro" id="IPR015422">
    <property type="entry name" value="PyrdxlP-dep_Trfase_small"/>
</dbReference>
<dbReference type="NCBIfam" id="TIGR00713">
    <property type="entry name" value="hemL"/>
    <property type="match status" value="1"/>
</dbReference>
<dbReference type="NCBIfam" id="NF000818">
    <property type="entry name" value="PRK00062.1"/>
    <property type="match status" value="1"/>
</dbReference>
<dbReference type="PANTHER" id="PTHR43713">
    <property type="entry name" value="GLUTAMATE-1-SEMIALDEHYDE 2,1-AMINOMUTASE"/>
    <property type="match status" value="1"/>
</dbReference>
<dbReference type="PANTHER" id="PTHR43713:SF3">
    <property type="entry name" value="GLUTAMATE-1-SEMIALDEHYDE 2,1-AMINOMUTASE 1, CHLOROPLASTIC-RELATED"/>
    <property type="match status" value="1"/>
</dbReference>
<dbReference type="Pfam" id="PF00202">
    <property type="entry name" value="Aminotran_3"/>
    <property type="match status" value="1"/>
</dbReference>
<dbReference type="SUPFAM" id="SSF53383">
    <property type="entry name" value="PLP-dependent transferases"/>
    <property type="match status" value="1"/>
</dbReference>
<dbReference type="PROSITE" id="PS00600">
    <property type="entry name" value="AA_TRANSFER_CLASS_3"/>
    <property type="match status" value="1"/>
</dbReference>
<protein>
    <recommendedName>
        <fullName evidence="1">Glutamate-1-semialdehyde 2,1-aminomutase</fullName>
        <shortName evidence="1">GSA</shortName>
        <ecNumber evidence="1">5.4.3.8</ecNumber>
    </recommendedName>
    <alternativeName>
        <fullName evidence="1">Glutamate-1-semialdehyde aminotransferase</fullName>
        <shortName evidence="1">GSA-AT</shortName>
    </alternativeName>
</protein>
<gene>
    <name evidence="1" type="primary">hemL</name>
    <name type="ordered locus">SCO4469</name>
    <name type="ORF">SCD65.12</name>
</gene>
<accession>Q9F2S0</accession>
<feature type="chain" id="PRO_0000120459" description="Glutamate-1-semialdehyde 2,1-aminomutase">
    <location>
        <begin position="1"/>
        <end position="438"/>
    </location>
</feature>
<feature type="modified residue" description="N6-(pyridoxal phosphate)lysine" evidence="1">
    <location>
        <position position="274"/>
    </location>
</feature>
<name>GSA_STRCO</name>
<reference key="1">
    <citation type="journal article" date="2002" name="Nature">
        <title>Complete genome sequence of the model actinomycete Streptomyces coelicolor A3(2).</title>
        <authorList>
            <person name="Bentley S.D."/>
            <person name="Chater K.F."/>
            <person name="Cerdeno-Tarraga A.-M."/>
            <person name="Challis G.L."/>
            <person name="Thomson N.R."/>
            <person name="James K.D."/>
            <person name="Harris D.E."/>
            <person name="Quail M.A."/>
            <person name="Kieser H."/>
            <person name="Harper D."/>
            <person name="Bateman A."/>
            <person name="Brown S."/>
            <person name="Chandra G."/>
            <person name="Chen C.W."/>
            <person name="Collins M."/>
            <person name="Cronin A."/>
            <person name="Fraser A."/>
            <person name="Goble A."/>
            <person name="Hidalgo J."/>
            <person name="Hornsby T."/>
            <person name="Howarth S."/>
            <person name="Huang C.-H."/>
            <person name="Kieser T."/>
            <person name="Larke L."/>
            <person name="Murphy L.D."/>
            <person name="Oliver K."/>
            <person name="O'Neil S."/>
            <person name="Rabbinowitsch E."/>
            <person name="Rajandream M.A."/>
            <person name="Rutherford K.M."/>
            <person name="Rutter S."/>
            <person name="Seeger K."/>
            <person name="Saunders D."/>
            <person name="Sharp S."/>
            <person name="Squares R."/>
            <person name="Squares S."/>
            <person name="Taylor K."/>
            <person name="Warren T."/>
            <person name="Wietzorrek A."/>
            <person name="Woodward J.R."/>
            <person name="Barrell B.G."/>
            <person name="Parkhill J."/>
            <person name="Hopwood D.A."/>
        </authorList>
    </citation>
    <scope>NUCLEOTIDE SEQUENCE [LARGE SCALE GENOMIC DNA]</scope>
    <source>
        <strain>ATCC BAA-471 / A3(2) / M145</strain>
    </source>
</reference>
<proteinExistence type="inferred from homology"/>
<comment type="catalytic activity">
    <reaction evidence="1">
        <text>(S)-4-amino-5-oxopentanoate = 5-aminolevulinate</text>
        <dbReference type="Rhea" id="RHEA:14265"/>
        <dbReference type="ChEBI" id="CHEBI:57501"/>
        <dbReference type="ChEBI" id="CHEBI:356416"/>
        <dbReference type="EC" id="5.4.3.8"/>
    </reaction>
</comment>
<comment type="cofactor">
    <cofactor evidence="1">
        <name>pyridoxal 5'-phosphate</name>
        <dbReference type="ChEBI" id="CHEBI:597326"/>
    </cofactor>
</comment>
<comment type="pathway">
    <text evidence="1">Porphyrin-containing compound metabolism; protoporphyrin-IX biosynthesis; 5-aminolevulinate from L-glutamyl-tRNA(Glu): step 2/2.</text>
</comment>
<comment type="subunit">
    <text evidence="1">Homodimer.</text>
</comment>
<comment type="subcellular location">
    <subcellularLocation>
        <location evidence="1">Cytoplasm</location>
    </subcellularLocation>
</comment>
<comment type="similarity">
    <text evidence="1">Belongs to the class-III pyridoxal-phosphate-dependent aminotransferase family. HemL subfamily.</text>
</comment>
<sequence length="438" mass="45341">MSELAYPYEAPASQALFDRAAAVTPGGVNSPVRAFRAVGGTPRFMVSGTGPYLTDADGREYVDLVCSWGPMILGHAHPEVIAAVQEAVARGTSFGTPAEGEVALAEAMVERVAPLEEVRLVSSGTEATMSAIRLARGFTRRTKVIKFAGCYHGHVDSLLAAAGSGVATFALPDTPGVTGAQASDTIVLPYNDLDAVHAAFAAHPGEIACVITEASPGNMGVVPPLPGFNQGLKDACAANGALFVSDEVMTGFRTSLAGWFGVEGVVPDLMTFGKVMGGGFPAAAFGGRADVMAHLAPAGPVYQAGTLSGNPVATAAGLAQLRLLDDAAYDTVDAVSAQIQALVTEALTKEGVAHTLQNASNMFSVFFTDRPVVNYEDAKAQESFRFTAFFHSLLANGVYLPPSSFESWFVSTAHDERAVQRIADALPAAARAAAEATA</sequence>
<evidence type="ECO:0000255" key="1">
    <source>
        <dbReference type="HAMAP-Rule" id="MF_00375"/>
    </source>
</evidence>